<feature type="chain" id="PRO_0000232691" description="Probable ubiquitin-conjugating enzyme E2 W-A">
    <location>
        <begin position="1"/>
        <end position="151"/>
    </location>
</feature>
<feature type="domain" description="UBC core" evidence="2">
    <location>
        <begin position="3"/>
        <end position="151"/>
    </location>
</feature>
<feature type="active site" description="Glycyl thioester intermediate" evidence="2">
    <location>
        <position position="91"/>
    </location>
</feature>
<comment type="function">
    <text evidence="1">Accepts ubiquitin from the E1 complex and catalyzes its covalent attachment to other proteins. Catalyzes monoubiquitination. Involved in degradation of misfolded chaperone substrate and DNA repair.</text>
</comment>
<comment type="catalytic activity">
    <reaction evidence="1 2">
        <text>S-ubiquitinyl-[E1 ubiquitin-activating enzyme]-L-cysteine + [E2 ubiquitin-conjugating enzyme]-L-cysteine = [E1 ubiquitin-activating enzyme]-L-cysteine + S-ubiquitinyl-[E2 ubiquitin-conjugating enzyme]-L-cysteine.</text>
        <dbReference type="EC" id="2.3.2.23"/>
    </reaction>
</comment>
<comment type="catalytic activity">
    <reaction evidence="1">
        <text>S-ubiquitinyl-[E1 ubiquitin-activating enzyme]-L-cysteine + [acceptor protein]-N-terminal-amino acid = [E1 ubiquitin-activating enzyme]-L-cysteine + N-terminal-ubiquitinyl-[acceptor protein].</text>
        <dbReference type="EC" id="2.3.2.25"/>
    </reaction>
</comment>
<comment type="pathway">
    <text evidence="2">Protein modification; protein ubiquitination.</text>
</comment>
<comment type="subcellular location">
    <subcellularLocation>
        <location evidence="1">Nucleus</location>
    </subcellularLocation>
</comment>
<comment type="similarity">
    <text evidence="2">Belongs to the ubiquitin-conjugating enzyme family.</text>
</comment>
<comment type="sequence caution" evidence="3">
    <conflict type="erroneous initiation">
        <sequence resource="EMBL-CDS" id="AAH95816"/>
    </conflict>
    <text>Extended N-terminus.</text>
</comment>
<organism>
    <name type="scientific">Danio rerio</name>
    <name type="common">Zebrafish</name>
    <name type="synonym">Brachydanio rerio</name>
    <dbReference type="NCBI Taxonomy" id="7955"/>
    <lineage>
        <taxon>Eukaryota</taxon>
        <taxon>Metazoa</taxon>
        <taxon>Chordata</taxon>
        <taxon>Craniata</taxon>
        <taxon>Vertebrata</taxon>
        <taxon>Euteleostomi</taxon>
        <taxon>Actinopterygii</taxon>
        <taxon>Neopterygii</taxon>
        <taxon>Teleostei</taxon>
        <taxon>Ostariophysi</taxon>
        <taxon>Cypriniformes</taxon>
        <taxon>Danionidae</taxon>
        <taxon>Danioninae</taxon>
        <taxon>Danio</taxon>
    </lineage>
</organism>
<evidence type="ECO:0000250" key="1">
    <source>
        <dbReference type="UniProtKB" id="Q96B02"/>
    </source>
</evidence>
<evidence type="ECO:0000255" key="2">
    <source>
        <dbReference type="PROSITE-ProRule" id="PRU00388"/>
    </source>
</evidence>
<evidence type="ECO:0000305" key="3"/>
<keyword id="KW-0067">ATP-binding</keyword>
<keyword id="KW-0227">DNA damage</keyword>
<keyword id="KW-0234">DNA repair</keyword>
<keyword id="KW-0547">Nucleotide-binding</keyword>
<keyword id="KW-0539">Nucleus</keyword>
<keyword id="KW-1185">Reference proteome</keyword>
<keyword id="KW-0808">Transferase</keyword>
<keyword id="KW-0833">Ubl conjugation pathway</keyword>
<sequence length="151" mass="17399">MASMQKRLQKELLALQNDPPAGMTLNERSVQNTITEWFIDMEGAQGTVYEGEKFQLLFKFSSRYPFESPQVMFTGENIPVHPHVYSNGHICLSILTEDWSPALSVQSVCLSIISMLSSCKEKRRPPDNSFYVKTCNKNPKKTKWWYHDDTC</sequence>
<gene>
    <name type="primary">ube2wa</name>
    <name type="synonym">ube2w</name>
    <name type="ORF">im:6905459</name>
    <name type="ORF">si:ch211-193n21.4</name>
</gene>
<name>UB2WA_DANRE</name>
<proteinExistence type="evidence at transcript level"/>
<accession>Q4VBH4</accession>
<accession>B0V2U1</accession>
<protein>
    <recommendedName>
        <fullName>Probable ubiquitin-conjugating enzyme E2 W-A</fullName>
        <ecNumber>2.3.2.25</ecNumber>
    </recommendedName>
    <alternativeName>
        <fullName>E2 ubiquitin-conjugating enzyme W-A</fullName>
    </alternativeName>
    <alternativeName>
        <fullName>N-terminal E2 ubiquitin-conjugating enzyme</fullName>
        <ecNumber>2.3.2.23</ecNumber>
    </alternativeName>
    <alternativeName>
        <fullName>Ubiquitin carrier protein W-A</fullName>
    </alternativeName>
    <alternativeName>
        <fullName>Ubiquitin-protein ligase W-A</fullName>
    </alternativeName>
</protein>
<reference key="1">
    <citation type="journal article" date="2013" name="Nature">
        <title>The zebrafish reference genome sequence and its relationship to the human genome.</title>
        <authorList>
            <person name="Howe K."/>
            <person name="Clark M.D."/>
            <person name="Torroja C.F."/>
            <person name="Torrance J."/>
            <person name="Berthelot C."/>
            <person name="Muffato M."/>
            <person name="Collins J.E."/>
            <person name="Humphray S."/>
            <person name="McLaren K."/>
            <person name="Matthews L."/>
            <person name="McLaren S."/>
            <person name="Sealy I."/>
            <person name="Caccamo M."/>
            <person name="Churcher C."/>
            <person name="Scott C."/>
            <person name="Barrett J.C."/>
            <person name="Koch R."/>
            <person name="Rauch G.J."/>
            <person name="White S."/>
            <person name="Chow W."/>
            <person name="Kilian B."/>
            <person name="Quintais L.T."/>
            <person name="Guerra-Assuncao J.A."/>
            <person name="Zhou Y."/>
            <person name="Gu Y."/>
            <person name="Yen J."/>
            <person name="Vogel J.H."/>
            <person name="Eyre T."/>
            <person name="Redmond S."/>
            <person name="Banerjee R."/>
            <person name="Chi J."/>
            <person name="Fu B."/>
            <person name="Langley E."/>
            <person name="Maguire S.F."/>
            <person name="Laird G.K."/>
            <person name="Lloyd D."/>
            <person name="Kenyon E."/>
            <person name="Donaldson S."/>
            <person name="Sehra H."/>
            <person name="Almeida-King J."/>
            <person name="Loveland J."/>
            <person name="Trevanion S."/>
            <person name="Jones M."/>
            <person name="Quail M."/>
            <person name="Willey D."/>
            <person name="Hunt A."/>
            <person name="Burton J."/>
            <person name="Sims S."/>
            <person name="McLay K."/>
            <person name="Plumb B."/>
            <person name="Davis J."/>
            <person name="Clee C."/>
            <person name="Oliver K."/>
            <person name="Clark R."/>
            <person name="Riddle C."/>
            <person name="Elliot D."/>
            <person name="Threadgold G."/>
            <person name="Harden G."/>
            <person name="Ware D."/>
            <person name="Begum S."/>
            <person name="Mortimore B."/>
            <person name="Kerry G."/>
            <person name="Heath P."/>
            <person name="Phillimore B."/>
            <person name="Tracey A."/>
            <person name="Corby N."/>
            <person name="Dunn M."/>
            <person name="Johnson C."/>
            <person name="Wood J."/>
            <person name="Clark S."/>
            <person name="Pelan S."/>
            <person name="Griffiths G."/>
            <person name="Smith M."/>
            <person name="Glithero R."/>
            <person name="Howden P."/>
            <person name="Barker N."/>
            <person name="Lloyd C."/>
            <person name="Stevens C."/>
            <person name="Harley J."/>
            <person name="Holt K."/>
            <person name="Panagiotidis G."/>
            <person name="Lovell J."/>
            <person name="Beasley H."/>
            <person name="Henderson C."/>
            <person name="Gordon D."/>
            <person name="Auger K."/>
            <person name="Wright D."/>
            <person name="Collins J."/>
            <person name="Raisen C."/>
            <person name="Dyer L."/>
            <person name="Leung K."/>
            <person name="Robertson L."/>
            <person name="Ambridge K."/>
            <person name="Leongamornlert D."/>
            <person name="McGuire S."/>
            <person name="Gilderthorp R."/>
            <person name="Griffiths C."/>
            <person name="Manthravadi D."/>
            <person name="Nichol S."/>
            <person name="Barker G."/>
            <person name="Whitehead S."/>
            <person name="Kay M."/>
            <person name="Brown J."/>
            <person name="Murnane C."/>
            <person name="Gray E."/>
            <person name="Humphries M."/>
            <person name="Sycamore N."/>
            <person name="Barker D."/>
            <person name="Saunders D."/>
            <person name="Wallis J."/>
            <person name="Babbage A."/>
            <person name="Hammond S."/>
            <person name="Mashreghi-Mohammadi M."/>
            <person name="Barr L."/>
            <person name="Martin S."/>
            <person name="Wray P."/>
            <person name="Ellington A."/>
            <person name="Matthews N."/>
            <person name="Ellwood M."/>
            <person name="Woodmansey R."/>
            <person name="Clark G."/>
            <person name="Cooper J."/>
            <person name="Tromans A."/>
            <person name="Grafham D."/>
            <person name="Skuce C."/>
            <person name="Pandian R."/>
            <person name="Andrews R."/>
            <person name="Harrison E."/>
            <person name="Kimberley A."/>
            <person name="Garnett J."/>
            <person name="Fosker N."/>
            <person name="Hall R."/>
            <person name="Garner P."/>
            <person name="Kelly D."/>
            <person name="Bird C."/>
            <person name="Palmer S."/>
            <person name="Gehring I."/>
            <person name="Berger A."/>
            <person name="Dooley C.M."/>
            <person name="Ersan-Urun Z."/>
            <person name="Eser C."/>
            <person name="Geiger H."/>
            <person name="Geisler M."/>
            <person name="Karotki L."/>
            <person name="Kirn A."/>
            <person name="Konantz J."/>
            <person name="Konantz M."/>
            <person name="Oberlander M."/>
            <person name="Rudolph-Geiger S."/>
            <person name="Teucke M."/>
            <person name="Lanz C."/>
            <person name="Raddatz G."/>
            <person name="Osoegawa K."/>
            <person name="Zhu B."/>
            <person name="Rapp A."/>
            <person name="Widaa S."/>
            <person name="Langford C."/>
            <person name="Yang F."/>
            <person name="Schuster S.C."/>
            <person name="Carter N.P."/>
            <person name="Harrow J."/>
            <person name="Ning Z."/>
            <person name="Herrero J."/>
            <person name="Searle S.M."/>
            <person name="Enright A."/>
            <person name="Geisler R."/>
            <person name="Plasterk R.H."/>
            <person name="Lee C."/>
            <person name="Westerfield M."/>
            <person name="de Jong P.J."/>
            <person name="Zon L.I."/>
            <person name="Postlethwait J.H."/>
            <person name="Nusslein-Volhard C."/>
            <person name="Hubbard T.J."/>
            <person name="Roest Crollius H."/>
            <person name="Rogers J."/>
            <person name="Stemple D.L."/>
        </authorList>
    </citation>
    <scope>NUCLEOTIDE SEQUENCE [LARGE SCALE GENOMIC DNA]</scope>
    <source>
        <strain>Tuebingen</strain>
    </source>
</reference>
<reference key="2">
    <citation type="submission" date="2005-05" db="EMBL/GenBank/DDBJ databases">
        <authorList>
            <consortium name="NIH - Zebrafish Gene Collection (ZGC) project"/>
        </authorList>
    </citation>
    <scope>NUCLEOTIDE SEQUENCE [LARGE SCALE MRNA]</scope>
    <source>
        <tissue>Olfactory epithelium</tissue>
    </source>
</reference>
<dbReference type="EC" id="2.3.2.25"/>
<dbReference type="EC" id="2.3.2.23"/>
<dbReference type="EMBL" id="CT027743">
    <property type="protein sequence ID" value="CAQ15478.1"/>
    <property type="molecule type" value="Genomic_DNA"/>
</dbReference>
<dbReference type="EMBL" id="BC095816">
    <property type="protein sequence ID" value="AAH95816.1"/>
    <property type="status" value="ALT_INIT"/>
    <property type="molecule type" value="mRNA"/>
</dbReference>
<dbReference type="RefSeq" id="NP_001116444.1">
    <property type="nucleotide sequence ID" value="NM_001122972.1"/>
</dbReference>
<dbReference type="SMR" id="Q4VBH4"/>
<dbReference type="FunCoup" id="Q4VBH4">
    <property type="interactions" value="1535"/>
</dbReference>
<dbReference type="STRING" id="7955.ENSDARP00000108827"/>
<dbReference type="PaxDb" id="7955-ENSDARP00000108827"/>
<dbReference type="Ensembl" id="ENSDART00000130142">
    <property type="protein sequence ID" value="ENSDARP00000108827"/>
    <property type="gene ID" value="ENSDARG00000044923"/>
</dbReference>
<dbReference type="GeneID" id="553013"/>
<dbReference type="KEGG" id="dre:553013"/>
<dbReference type="AGR" id="ZFIN:ZDB-GENE-050506-94"/>
<dbReference type="CTD" id="553013"/>
<dbReference type="ZFIN" id="ZDB-GENE-050506-94">
    <property type="gene designation" value="ube2wa"/>
</dbReference>
<dbReference type="eggNOG" id="KOG0427">
    <property type="taxonomic scope" value="Eukaryota"/>
</dbReference>
<dbReference type="HOGENOM" id="CLU_030988_15_1_1"/>
<dbReference type="InParanoid" id="Q4VBH4"/>
<dbReference type="OMA" id="EWQRNPP"/>
<dbReference type="OrthoDB" id="406833at2759"/>
<dbReference type="PhylomeDB" id="Q4VBH4"/>
<dbReference type="TreeFam" id="TF314582"/>
<dbReference type="UniPathway" id="UPA00143"/>
<dbReference type="PRO" id="PR:Q4VBH4"/>
<dbReference type="Proteomes" id="UP000000437">
    <property type="component" value="Chromosome 2"/>
</dbReference>
<dbReference type="Bgee" id="ENSDARG00000044923">
    <property type="expression patterns" value="Expressed in mature ovarian follicle and 20 other cell types or tissues"/>
</dbReference>
<dbReference type="GO" id="GO:0005634">
    <property type="term" value="C:nucleus"/>
    <property type="evidence" value="ECO:0000318"/>
    <property type="project" value="GO_Central"/>
</dbReference>
<dbReference type="GO" id="GO:0005524">
    <property type="term" value="F:ATP binding"/>
    <property type="evidence" value="ECO:0007669"/>
    <property type="project" value="UniProtKB-KW"/>
</dbReference>
<dbReference type="GO" id="GO:0061631">
    <property type="term" value="F:ubiquitin conjugating enzyme activity"/>
    <property type="evidence" value="ECO:0000318"/>
    <property type="project" value="GO_Central"/>
</dbReference>
<dbReference type="GO" id="GO:0004842">
    <property type="term" value="F:ubiquitin-protein transferase activity"/>
    <property type="evidence" value="ECO:0000250"/>
    <property type="project" value="UniProtKB"/>
</dbReference>
<dbReference type="GO" id="GO:0071218">
    <property type="term" value="P:cellular response to misfolded protein"/>
    <property type="evidence" value="ECO:0000250"/>
    <property type="project" value="UniProtKB"/>
</dbReference>
<dbReference type="GO" id="GO:0006281">
    <property type="term" value="P:DNA repair"/>
    <property type="evidence" value="ECO:0007669"/>
    <property type="project" value="UniProtKB-KW"/>
</dbReference>
<dbReference type="GO" id="GO:0043161">
    <property type="term" value="P:proteasome-mediated ubiquitin-dependent protein catabolic process"/>
    <property type="evidence" value="ECO:0000250"/>
    <property type="project" value="UniProtKB"/>
</dbReference>
<dbReference type="GO" id="GO:0006513">
    <property type="term" value="P:protein monoubiquitination"/>
    <property type="evidence" value="ECO:0000250"/>
    <property type="project" value="UniProtKB"/>
</dbReference>
<dbReference type="GO" id="GO:0000209">
    <property type="term" value="P:protein polyubiquitination"/>
    <property type="evidence" value="ECO:0000318"/>
    <property type="project" value="GO_Central"/>
</dbReference>
<dbReference type="GO" id="GO:0006515">
    <property type="term" value="P:protein quality control for misfolded or incompletely synthesized proteins"/>
    <property type="evidence" value="ECO:0000250"/>
    <property type="project" value="UniProtKB"/>
</dbReference>
<dbReference type="CDD" id="cd23808">
    <property type="entry name" value="UBCc_UBE2W"/>
    <property type="match status" value="1"/>
</dbReference>
<dbReference type="FunFam" id="3.10.110.10:FF:000022">
    <property type="entry name" value="Ubiquitin-conjugating enzyme E2 W"/>
    <property type="match status" value="1"/>
</dbReference>
<dbReference type="Gene3D" id="3.10.110.10">
    <property type="entry name" value="Ubiquitin Conjugating Enzyme"/>
    <property type="match status" value="1"/>
</dbReference>
<dbReference type="InterPro" id="IPR050113">
    <property type="entry name" value="Ub_conjugating_enzyme"/>
</dbReference>
<dbReference type="InterPro" id="IPR000608">
    <property type="entry name" value="UBQ-conjugat_E2_core"/>
</dbReference>
<dbReference type="InterPro" id="IPR016135">
    <property type="entry name" value="UBQ-conjugating_enzyme/RWD"/>
</dbReference>
<dbReference type="PANTHER" id="PTHR24067">
    <property type="entry name" value="UBIQUITIN-CONJUGATING ENZYME E2"/>
    <property type="match status" value="1"/>
</dbReference>
<dbReference type="Pfam" id="PF00179">
    <property type="entry name" value="UQ_con"/>
    <property type="match status" value="1"/>
</dbReference>
<dbReference type="SMART" id="SM00212">
    <property type="entry name" value="UBCc"/>
    <property type="match status" value="1"/>
</dbReference>
<dbReference type="SUPFAM" id="SSF54495">
    <property type="entry name" value="UBC-like"/>
    <property type="match status" value="1"/>
</dbReference>
<dbReference type="PROSITE" id="PS50127">
    <property type="entry name" value="UBC_2"/>
    <property type="match status" value="1"/>
</dbReference>